<organism>
    <name type="scientific">Human immunodeficiency virus type 1 group M subtype C (isolate ETH2220)</name>
    <name type="common">HIV-1</name>
    <dbReference type="NCBI Taxonomy" id="388796"/>
    <lineage>
        <taxon>Viruses</taxon>
        <taxon>Riboviria</taxon>
        <taxon>Pararnavirae</taxon>
        <taxon>Artverviricota</taxon>
        <taxon>Revtraviricetes</taxon>
        <taxon>Ortervirales</taxon>
        <taxon>Retroviridae</taxon>
        <taxon>Orthoretrovirinae</taxon>
        <taxon>Lentivirus</taxon>
        <taxon>Human immunodeficiency virus type 1</taxon>
    </lineage>
</organism>
<protein>
    <recommendedName>
        <fullName>Protein Tat</fullName>
    </recommendedName>
    <alternativeName>
        <fullName>Transactivating regulatory protein</fullName>
    </alternativeName>
</protein>
<evidence type="ECO:0000250" key="1"/>
<evidence type="ECO:0000250" key="2">
    <source>
        <dbReference type="UniProtKB" id="P04608"/>
    </source>
</evidence>
<evidence type="ECO:0000250" key="3">
    <source>
        <dbReference type="UniProtKB" id="P04610"/>
    </source>
</evidence>
<evidence type="ECO:0000255" key="4">
    <source>
        <dbReference type="HAMAP-Rule" id="MF_04079"/>
    </source>
</evidence>
<evidence type="ECO:0000305" key="5"/>
<name>TAT_HV1ET</name>
<organismHost>
    <name type="scientific">Homo sapiens</name>
    <name type="common">Human</name>
    <dbReference type="NCBI Taxonomy" id="9606"/>
</organismHost>
<accession>Q75005</accession>
<dbReference type="EMBL" id="U46016">
    <property type="protein sequence ID" value="AAB36504.1"/>
    <property type="molecule type" value="Genomic_DNA"/>
</dbReference>
<dbReference type="SMR" id="Q75005"/>
<dbReference type="Proteomes" id="UP000007694">
    <property type="component" value="Segment"/>
</dbReference>
<dbReference type="GO" id="GO:0005576">
    <property type="term" value="C:extracellular region"/>
    <property type="evidence" value="ECO:0007669"/>
    <property type="project" value="UniProtKB-SubCell"/>
</dbReference>
<dbReference type="GO" id="GO:0030430">
    <property type="term" value="C:host cell cytoplasm"/>
    <property type="evidence" value="ECO:0007669"/>
    <property type="project" value="UniProtKB-SubCell"/>
</dbReference>
<dbReference type="GO" id="GO:0044196">
    <property type="term" value="C:host cell nucleolus"/>
    <property type="evidence" value="ECO:0007669"/>
    <property type="project" value="UniProtKB-SubCell"/>
</dbReference>
<dbReference type="GO" id="GO:0046872">
    <property type="term" value="F:metal ion binding"/>
    <property type="evidence" value="ECO:0007669"/>
    <property type="project" value="UniProtKB-KW"/>
</dbReference>
<dbReference type="GO" id="GO:0004865">
    <property type="term" value="F:protein serine/threonine phosphatase inhibitor activity"/>
    <property type="evidence" value="ECO:0007669"/>
    <property type="project" value="UniProtKB-KW"/>
</dbReference>
<dbReference type="GO" id="GO:0003723">
    <property type="term" value="F:RNA binding"/>
    <property type="evidence" value="ECO:0007669"/>
    <property type="project" value="UniProtKB-KW"/>
</dbReference>
<dbReference type="GO" id="GO:0001070">
    <property type="term" value="F:RNA-binding transcription regulator activity"/>
    <property type="evidence" value="ECO:0007669"/>
    <property type="project" value="InterPro"/>
</dbReference>
<dbReference type="GO" id="GO:0050434">
    <property type="term" value="P:positive regulation of viral transcription"/>
    <property type="evidence" value="ECO:0007669"/>
    <property type="project" value="InterPro"/>
</dbReference>
<dbReference type="GO" id="GO:0039525">
    <property type="term" value="P:symbiont-mediated perturbation of host chromatin organization"/>
    <property type="evidence" value="ECO:0007669"/>
    <property type="project" value="UniProtKB-KW"/>
</dbReference>
<dbReference type="GO" id="GO:0052170">
    <property type="term" value="P:symbiont-mediated suppression of host innate immune response"/>
    <property type="evidence" value="ECO:0007669"/>
    <property type="project" value="UniProtKB-KW"/>
</dbReference>
<dbReference type="GO" id="GO:0039606">
    <property type="term" value="P:symbiont-mediated suppression of host translation initiation"/>
    <property type="evidence" value="ECO:0007669"/>
    <property type="project" value="UniProtKB-KW"/>
</dbReference>
<dbReference type="GO" id="GO:0039502">
    <property type="term" value="P:symbiont-mediated suppression of host type I interferon-mediated signaling pathway"/>
    <property type="evidence" value="ECO:0007669"/>
    <property type="project" value="UniProtKB-KW"/>
</dbReference>
<dbReference type="Gene3D" id="4.10.20.10">
    <property type="entry name" value="Tat domain"/>
    <property type="match status" value="1"/>
</dbReference>
<dbReference type="InterPro" id="IPR001831">
    <property type="entry name" value="IV_Tat"/>
</dbReference>
<dbReference type="InterPro" id="IPR036963">
    <property type="entry name" value="Tat_dom_sf"/>
</dbReference>
<dbReference type="Pfam" id="PF00539">
    <property type="entry name" value="Tat"/>
    <property type="match status" value="1"/>
</dbReference>
<reference key="1">
    <citation type="journal article" date="1996" name="AIDS Res. Hum. Retroviruses">
        <title>Full-length sequence of an ethiopian human immunodeficiency virus type 1 (HIV-1) isolate of genetic subtype C.</title>
        <authorList>
            <person name="Salminen M.O."/>
            <person name="Johansson B."/>
            <person name="Sonnerborg A."/>
            <person name="Ayehunie S."/>
            <person name="Gotte D."/>
            <person name="Leinikki P."/>
            <person name="Burke D.S."/>
            <person name="McCutchan F.E."/>
        </authorList>
    </citation>
    <scope>NUCLEOTIDE SEQUENCE [GENOMIC DNA]</scope>
</reference>
<reference key="2">
    <citation type="journal article" date="2005" name="Microbes Infect.">
        <title>Decoding Tat: the biology of HIV Tat posttranslational modifications.</title>
        <authorList>
            <person name="Hetzer C."/>
            <person name="Dormeyer W."/>
            <person name="Schnolzer M."/>
            <person name="Ott M."/>
        </authorList>
    </citation>
    <scope>REVIEW</scope>
    <scope>ALTERNATIVE SPLICING</scope>
</reference>
<reference key="3">
    <citation type="journal article" date="2006" name="Front. Biosci.">
        <title>The multiple functions of HIV-1 Tat: proliferation versus apoptosis.</title>
        <authorList>
            <person name="Peruzzi F."/>
        </authorList>
    </citation>
    <scope>REVIEW</scope>
</reference>
<reference key="4">
    <citation type="journal article" date="2006" name="Microbes Infect.">
        <title>HIV tat and neurotoxicity.</title>
        <authorList>
            <person name="King J.E."/>
            <person name="Eugenin E.A."/>
            <person name="Buckner C.M."/>
            <person name="Berman J.W."/>
        </authorList>
    </citation>
    <scope>REVIEW</scope>
</reference>
<comment type="function">
    <text evidence="2">Transcriptional activator that increases RNA Pol II processivity, thereby increasing the level of full-length viral transcripts. Recognizes a hairpin structure at the 5'-LTR of the nascent viral mRNAs referred to as the transactivation responsive RNA element (TAR) and recruits the cyclin T1-CDK9 complex (P-TEFb complex) that will in turn hyperphosphorylate the RNA polymerase II to allow efficient elongation. The CDK9 component of P-TEFb and other Tat-activated kinases hyperphosphorylate the C-terminus of RNA Pol II that becomes stabilized and much more processive. Other factors such as HTATSF1/Tat-SF1, SUPT5H/SPT5, and HTATIP2 are also important for Tat's function. Besides its effect on RNA Pol II processivity, Tat induces chromatin remodeling of proviral genes by recruiting the histone acetyltransferases (HATs) CREBBP, EP300 and PCAF to the chromatin. This also contributes to the increase in proviral transcription rate, especially when the provirus integrates in transcriptionally silent region of the host genome. To ensure maximal activation of the LTR, Tat mediates nuclear translocation of NF-kappa-B by interacting with host RELA. Through its interaction with host TBP, Tat may also modulate transcription initiation. Tat can reactivate a latently infected cell by penetrating in it and transactivating its LTR promoter. In the cytoplasm, Tat is thought to act as a translational activator of HIV-1 mRNAs.</text>
</comment>
<comment type="function">
    <text evidence="2">Extracellular circulating Tat can be endocytosed by surrounding uninfected cells via the binding to several surface receptors such as CD26, CXCR4, heparan sulfate proteoglycans (HSPG) or LDLR. Neurons are rarely infected, but they internalize Tat via their LDLR. Through its interaction with nuclear HATs, Tat is potentially able to control the acetylation-dependent cellular gene expression. Modulates the expression of many cellular genes involved in cell survival, proliferation or in coding for cytokines or cytokine receptors. Tat plays a role in T-cell and neurons apoptosis. Tat induced neurotoxicity and apoptosis probably contribute to neuroAIDS. Circulating Tat also acts as a chemokine-like and/or growth factor-like molecule that binds to specific receptors on the surface of the cells, affecting many cellular pathways. In the vascular system, Tat binds to ITGAV/ITGB3 and ITGA5/ITGB1 integrins dimers at the surface of endothelial cells and competes with bFGF for heparin-binding sites, leading to an excess of soluble bFGF.</text>
</comment>
<comment type="subunit">
    <text evidence="4">Interacts with host CCNT1. Associates with the P-TEFb complex composed at least of Tat, P-TEFb (CDK9 and CCNT1), TAR RNA, RNA Pol II. Recruits the HATs CREBBP, TAF1/TFIID, EP300, PCAF and GCN5L2. Interacts with host KAT5/Tip60; this interaction targets the latter to degradation. Interacts with the host deacetylase SIRT1. Interacts with host capping enzyme RNGTT; this interaction stimulates RNGTT. Binds to host KDR, and to the host integrins ITGAV/ITGB3 and ITGA5/ITGB1. Interacts with host KPNB1/importin beta-1 without previous binding to KPNA1/importin alpha-1. Interacts with EIF2AK2. Interacts with host nucleosome assembly protein NAP1L1; this interaction may be required for the transport of Tat within the nucleus, since the two proteins interact at the nuclear rim. Interacts with host C1QBP/SF2P32; this interaction involves lysine-acetylated Tat. Interacts with the host chemokine receptors CCR2, CCR3 and CXCR4. Interacts with host DPP4/CD26; this interaction may trigger an anti-proliferative effect. Interacts with host LDLR. Interacts with the host extracellular matrix metalloproteinase MMP1. Interacts with host PRMT6; this interaction mediates Tat's methylation. Interacts with, and is ubiquitinated by MDM2/Hdm2. Interacts with host PSMC3 and HTATIP2. Interacts with STAB1; this interaction may overcome SATB1-mediated repression of IL2 and IL2RA (interleukin) in T cells by binding to the same domain than HDAC1. Interacts (when acetylated) with human CDK13, thereby increasing HIV-1 mRNA splicing and promoting the production of the doubly spliced HIV-1 protein Nef. Interacts with host TBP; this interaction modulates the activity of transcriptional pre-initiation complex. Interacts with host RELA. Interacts with host PLSCR1; this interaction negatively regulates Tat transactivation activity by altering its subcellular distribution.</text>
</comment>
<comment type="subcellular location">
    <subcellularLocation>
        <location evidence="2">Host nucleus</location>
        <location evidence="2">Host nucleolus</location>
    </subcellularLocation>
    <subcellularLocation>
        <location evidence="2">Host cytoplasm</location>
    </subcellularLocation>
    <subcellularLocation>
        <location evidence="2">Secreted</location>
    </subcellularLocation>
    <text evidence="2">Probably localizes to both nuclear and nucleolar compartments. Nuclear localization is mediated through the interaction of the nuclear localization signal with importin KPNB1. Secretion occurs through a Golgi-independent pathway. Tat is released from infected cells to the extracellular space where it remains associated to the cell membrane, or is secreted into the cerebrospinal fluid and sera. Extracellular Tat can be endocytosed by surrounding uninfected cells via binding to several receptors depending on the cell type.</text>
</comment>
<comment type="alternative products">
    <event type="alternative splicing"/>
    <isoform>
        <id>Q75005-1</id>
        <name>Long</name>
        <sequence type="displayed"/>
    </isoform>
    <isoform>
        <id>Q75005-2</id>
        <name>Short</name>
        <sequence type="not described"/>
    </isoform>
</comment>
<comment type="domain">
    <text evidence="3">The transactivation domain mediates the interaction with CCNT1, GCN5L2, and MDM2.</text>
</comment>
<comment type="domain">
    <text evidence="3">The Arg-rich RNA-binding region binds the TAR RNA. This region also mediates the nuclear localization through direct binding to KPNB1 and is involved in Tat's transfer across cell membranes (protein transduction). The same region is required for the interaction with EP300, PCAF, EIF2AK2 and KDR.</text>
</comment>
<comment type="domain">
    <text evidence="3">The Cys-rich region may bind 2 zinc ions. This region is involved in binding to KAT5.</text>
</comment>
<comment type="domain">
    <text evidence="3">The cell attachment site mediates the interaction with ITGAV/ITGB3 and ITGA5/ITGB1 integrins, leading to vascular cell migration and invasion. This interaction also provides endothelial cells with the adhesion signal they require to grow in response to mitogens.</text>
</comment>
<comment type="PTM">
    <text evidence="2">Phosphorylated by EIF2AK2 on serine and threonine residues adjacent to the basic region important for TAR RNA binding and function. Phosphorylation of Tat by EIF2AK2 is dependent on the prior activation of EIF2AK2 by dsRNA.</text>
</comment>
<comment type="PTM">
    <text evidence="2">Asymmetrical arginine methylation by host PRMT6 seems to diminish the transactivation capacity of Tat and affects the interaction with host CCNT1.</text>
</comment>
<comment type="PTM">
    <text evidence="2">Polyubiquitination by host MDM2 does not target Tat to degradation, but activates its transactivation function and fosters interaction with CCNT1 and TAR RNA.</text>
</comment>
<comment type="miscellaneous">
    <text>HIV-1 lineages are divided in three main groups, M (for Major), O (for Outlier), and N (for New, or Non-M, Non-O). The vast majority of strains found worldwide belong to the group M. Group O seems to be endemic to and largely confined to Cameroon and neighboring countries in West Central Africa, where these viruses represent a small minority of HIV-1 strains. The group N is represented by a limited number of isolates from Cameroonian persons. The group M is further subdivided in 9 clades or subtypes (A to D, F to H, J and K).</text>
</comment>
<comment type="miscellaneous">
    <text>This truncated variant has a premature stop codon. It may have arose as a consequence of tissue culture passaging.</text>
</comment>
<comment type="miscellaneous">
    <molecule>Isoform Short</molecule>
    <text evidence="5">Expressed in the late stage of the infection cycle, when unspliced viral RNAs are exported to the cytoplasm by the viral Rev protein.</text>
</comment>
<comment type="similarity">
    <text evidence="5">Belongs to the lentiviruses Tat family.</text>
</comment>
<sequence>MEPVDPNLEPWNHPGSQPKTACNQCYCKKCSYHCLVCFLTKA</sequence>
<proteinExistence type="inferred from homology"/>
<keyword id="KW-0007">Acetylation</keyword>
<keyword id="KW-0010">Activator</keyword>
<keyword id="KW-0014">AIDS</keyword>
<keyword id="KW-0025">Alternative splicing</keyword>
<keyword id="KW-0053">Apoptosis</keyword>
<keyword id="KW-1035">Host cytoplasm</keyword>
<keyword id="KW-1048">Host nucleus</keyword>
<keyword id="KW-0945">Host-virus interaction</keyword>
<keyword id="KW-1090">Inhibition of host innate immune response by virus</keyword>
<keyword id="KW-1114">Inhibition of host interferon signaling pathway by virus</keyword>
<keyword id="KW-0922">Interferon antiviral system evasion</keyword>
<keyword id="KW-0479">Metal-binding</keyword>
<keyword id="KW-0488">Methylation</keyword>
<keyword id="KW-1122">Modulation of host chromatin by virus</keyword>
<keyword id="KW-1126">Modulation of host PP1 activity by virus</keyword>
<keyword id="KW-0597">Phosphoprotein</keyword>
<keyword id="KW-1185">Reference proteome</keyword>
<keyword id="KW-0694">RNA-binding</keyword>
<keyword id="KW-0964">Secreted</keyword>
<keyword id="KW-0804">Transcription</keyword>
<keyword id="KW-0805">Transcription regulation</keyword>
<keyword id="KW-0832">Ubl conjugation</keyword>
<keyword id="KW-0899">Viral immunoevasion</keyword>
<keyword id="KW-0862">Zinc</keyword>
<feature type="chain" id="PRO_0000244851" description="Protein Tat">
    <location>
        <begin position="1"/>
        <end position="42"/>
    </location>
</feature>
<feature type="region of interest" description="Interaction with human CREBBP" evidence="1">
    <location>
        <begin position="1"/>
        <end position="24"/>
    </location>
</feature>
<feature type="region of interest" description="Cysteine-rich" evidence="1">
    <location>
        <begin position="22"/>
        <end position="37"/>
    </location>
</feature>
<feature type="site" description="Essential for Tat's translocation through the endosomal membrane" evidence="1">
    <location>
        <position position="11"/>
    </location>
</feature>
<feature type="modified residue" description="N6-acetyllysine; by host PCAF" evidence="1">
    <location>
        <position position="28"/>
    </location>
</feature>